<gene>
    <name evidence="1" type="primary">iolA1</name>
    <name type="ordered locus">BCE33L2116</name>
</gene>
<sequence length="486" mass="53005">MITTEIKRVKNHINGEWVESTGTEVEAVPNPATGKIIAYVPLSPKEDVEKAVEAAKAAYETWSKVPVPNRSRQLYKYLQLLQENKEELAKIITLENGKTLTDATGEVQRGIEAVELATSTPNLMMGQALPNIASGIDGSIWRYPIGVVAGITPFNFPMMIPLWMFPLAIACGNTFVLKTSERTPLLAERLVELFYEAGFPKGVLNLVQGGKDVVNSILENKDIQAVSFVGSEPVARYVYETGTKHGKRVQALAGAKNHAIVMPDCNLEKTVQGVIGSAFASSGERCMACSVVAVVDEIADEFIDVLVAETKKLKVGDGFHEDNYVGPLIRESHKERVLGYINSGVADGATLLVDGRKIKEEVGEGYFVGATIFDGVNQEMKIWQDEIFAPVLSIVRVKDLEEGIKLTNQSKFANGAVIYTSNGKHAQTFRDNIDAGMIGVNVNVPAPMAFFAFAGNKASFFGDLGTNGTDGVQFYTRKKVVTERWF</sequence>
<comment type="function">
    <text evidence="1">Catalyzes the oxidation of malonate semialdehyde (MSA) and methylmalonate semialdehyde (MMSA) into acetyl-CoA and propanoyl-CoA, respectively. Is involved in a myo-inositol catabolic pathway. Bicarbonate, and not CO2, is the end-product of the enzymatic reaction.</text>
</comment>
<comment type="catalytic activity">
    <reaction evidence="1">
        <text>3-oxopropanoate + NAD(+) + CoA + H2O = hydrogencarbonate + acetyl-CoA + NADH + H(+)</text>
        <dbReference type="Rhea" id="RHEA:76615"/>
        <dbReference type="ChEBI" id="CHEBI:15377"/>
        <dbReference type="ChEBI" id="CHEBI:15378"/>
        <dbReference type="ChEBI" id="CHEBI:17544"/>
        <dbReference type="ChEBI" id="CHEBI:33190"/>
        <dbReference type="ChEBI" id="CHEBI:57287"/>
        <dbReference type="ChEBI" id="CHEBI:57288"/>
        <dbReference type="ChEBI" id="CHEBI:57540"/>
        <dbReference type="ChEBI" id="CHEBI:57945"/>
        <dbReference type="EC" id="1.2.1.27"/>
    </reaction>
    <physiologicalReaction direction="left-to-right" evidence="1">
        <dbReference type="Rhea" id="RHEA:76616"/>
    </physiologicalReaction>
</comment>
<comment type="catalytic activity">
    <reaction evidence="1">
        <text>2-methyl-3-oxopropanoate + NAD(+) + CoA + H2O = propanoyl-CoA + hydrogencarbonate + NADH + H(+)</text>
        <dbReference type="Rhea" id="RHEA:20804"/>
        <dbReference type="ChEBI" id="CHEBI:15377"/>
        <dbReference type="ChEBI" id="CHEBI:15378"/>
        <dbReference type="ChEBI" id="CHEBI:17544"/>
        <dbReference type="ChEBI" id="CHEBI:57287"/>
        <dbReference type="ChEBI" id="CHEBI:57392"/>
        <dbReference type="ChEBI" id="CHEBI:57540"/>
        <dbReference type="ChEBI" id="CHEBI:57700"/>
        <dbReference type="ChEBI" id="CHEBI:57945"/>
        <dbReference type="EC" id="1.2.1.27"/>
    </reaction>
    <physiologicalReaction direction="left-to-right" evidence="1">
        <dbReference type="Rhea" id="RHEA:20805"/>
    </physiologicalReaction>
</comment>
<comment type="pathway">
    <text evidence="1">Polyol metabolism; myo-inositol degradation into acetyl-CoA; acetyl-CoA from myo-inositol: step 7/7.</text>
</comment>
<comment type="subunit">
    <text evidence="1">Homotetramer.</text>
</comment>
<comment type="similarity">
    <text evidence="1">Belongs to the aldehyde dehydrogenase family. IolA subfamily.</text>
</comment>
<proteinExistence type="inferred from homology"/>
<feature type="chain" id="PRO_0000352322" description="Malonate-semialdehyde dehydrogenase 1">
    <location>
        <begin position="1"/>
        <end position="486"/>
    </location>
</feature>
<feature type="active site" description="Nucleophile" evidence="1">
    <location>
        <position position="286"/>
    </location>
</feature>
<feature type="binding site" evidence="1">
    <location>
        <position position="154"/>
    </location>
    <ligand>
        <name>NAD(+)</name>
        <dbReference type="ChEBI" id="CHEBI:57540"/>
    </ligand>
</feature>
<feature type="binding site" evidence="1">
    <location>
        <position position="178"/>
    </location>
    <ligand>
        <name>NAD(+)</name>
        <dbReference type="ChEBI" id="CHEBI:57540"/>
    </ligand>
</feature>
<feature type="binding site" evidence="1">
    <location>
        <position position="181"/>
    </location>
    <ligand>
        <name>NAD(+)</name>
        <dbReference type="ChEBI" id="CHEBI:57540"/>
    </ligand>
</feature>
<feature type="binding site" evidence="1">
    <location>
        <position position="182"/>
    </location>
    <ligand>
        <name>NAD(+)</name>
        <dbReference type="ChEBI" id="CHEBI:57540"/>
    </ligand>
</feature>
<feature type="binding site" evidence="1">
    <location>
        <position position="231"/>
    </location>
    <ligand>
        <name>NAD(+)</name>
        <dbReference type="ChEBI" id="CHEBI:57540"/>
    </ligand>
</feature>
<feature type="binding site" evidence="1">
    <location>
        <position position="386"/>
    </location>
    <ligand>
        <name>NAD(+)</name>
        <dbReference type="ChEBI" id="CHEBI:57540"/>
    </ligand>
</feature>
<protein>
    <recommendedName>
        <fullName evidence="1">Malonate-semialdehyde dehydrogenase 1</fullName>
        <shortName evidence="1">MSA dehydrogenase 1</shortName>
        <ecNumber evidence="1">1.2.1.27</ecNumber>
    </recommendedName>
    <alternativeName>
        <fullName evidence="1">Methylmalonate-semialdehyde dehydrogenase 1</fullName>
        <shortName evidence="1">MMSA dehydrogenase 1</shortName>
        <shortName evidence="1">MSDH 1</shortName>
    </alternativeName>
</protein>
<name>IOLA1_BACCZ</name>
<keyword id="KW-0520">NAD</keyword>
<keyword id="KW-0560">Oxidoreductase</keyword>
<evidence type="ECO:0000255" key="1">
    <source>
        <dbReference type="HAMAP-Rule" id="MF_01670"/>
    </source>
</evidence>
<organism>
    <name type="scientific">Bacillus cereus (strain ZK / E33L)</name>
    <dbReference type="NCBI Taxonomy" id="288681"/>
    <lineage>
        <taxon>Bacteria</taxon>
        <taxon>Bacillati</taxon>
        <taxon>Bacillota</taxon>
        <taxon>Bacilli</taxon>
        <taxon>Bacillales</taxon>
        <taxon>Bacillaceae</taxon>
        <taxon>Bacillus</taxon>
        <taxon>Bacillus cereus group</taxon>
    </lineage>
</organism>
<accession>Q63BL0</accession>
<reference key="1">
    <citation type="journal article" date="2006" name="J. Bacteriol.">
        <title>Pathogenomic sequence analysis of Bacillus cereus and Bacillus thuringiensis isolates closely related to Bacillus anthracis.</title>
        <authorList>
            <person name="Han C.S."/>
            <person name="Xie G."/>
            <person name="Challacombe J.F."/>
            <person name="Altherr M.R."/>
            <person name="Bhotika S.S."/>
            <person name="Bruce D."/>
            <person name="Campbell C.S."/>
            <person name="Campbell M.L."/>
            <person name="Chen J."/>
            <person name="Chertkov O."/>
            <person name="Cleland C."/>
            <person name="Dimitrijevic M."/>
            <person name="Doggett N.A."/>
            <person name="Fawcett J.J."/>
            <person name="Glavina T."/>
            <person name="Goodwin L.A."/>
            <person name="Hill K.K."/>
            <person name="Hitchcock P."/>
            <person name="Jackson P.J."/>
            <person name="Keim P."/>
            <person name="Kewalramani A.R."/>
            <person name="Longmire J."/>
            <person name="Lucas S."/>
            <person name="Malfatti S."/>
            <person name="McMurry K."/>
            <person name="Meincke L.J."/>
            <person name="Misra M."/>
            <person name="Moseman B.L."/>
            <person name="Mundt M."/>
            <person name="Munk A.C."/>
            <person name="Okinaka R.T."/>
            <person name="Parson-Quintana B."/>
            <person name="Reilly L.P."/>
            <person name="Richardson P."/>
            <person name="Robinson D.L."/>
            <person name="Rubin E."/>
            <person name="Saunders E."/>
            <person name="Tapia R."/>
            <person name="Tesmer J.G."/>
            <person name="Thayer N."/>
            <person name="Thompson L.S."/>
            <person name="Tice H."/>
            <person name="Ticknor L.O."/>
            <person name="Wills P.L."/>
            <person name="Brettin T.S."/>
            <person name="Gilna P."/>
        </authorList>
    </citation>
    <scope>NUCLEOTIDE SEQUENCE [LARGE SCALE GENOMIC DNA]</scope>
    <source>
        <strain>ZK / E33L</strain>
    </source>
</reference>
<dbReference type="EC" id="1.2.1.27" evidence="1"/>
<dbReference type="EMBL" id="CP000001">
    <property type="protein sequence ID" value="AAU18142.1"/>
    <property type="molecule type" value="Genomic_DNA"/>
</dbReference>
<dbReference type="RefSeq" id="WP_000633357.1">
    <property type="nucleotide sequence ID" value="NZ_CP009968.1"/>
</dbReference>
<dbReference type="SMR" id="Q63BL0"/>
<dbReference type="KEGG" id="bcz:BCE33L2116"/>
<dbReference type="PATRIC" id="fig|288681.22.peg.3398"/>
<dbReference type="UniPathway" id="UPA00076">
    <property type="reaction ID" value="UER00148"/>
</dbReference>
<dbReference type="Proteomes" id="UP000002612">
    <property type="component" value="Chromosome"/>
</dbReference>
<dbReference type="GO" id="GO:0018478">
    <property type="term" value="F:malonate-semialdehyde dehydrogenase (acetylating) activity"/>
    <property type="evidence" value="ECO:0007669"/>
    <property type="project" value="UniProtKB-UniRule"/>
</dbReference>
<dbReference type="GO" id="GO:0004491">
    <property type="term" value="F:methylmalonate-semialdehyde dehydrogenase (acylating, NAD) activity"/>
    <property type="evidence" value="ECO:0007669"/>
    <property type="project" value="UniProtKB-UniRule"/>
</dbReference>
<dbReference type="GO" id="GO:0019310">
    <property type="term" value="P:inositol catabolic process"/>
    <property type="evidence" value="ECO:0007669"/>
    <property type="project" value="UniProtKB-UniRule"/>
</dbReference>
<dbReference type="GO" id="GO:0006210">
    <property type="term" value="P:thymine catabolic process"/>
    <property type="evidence" value="ECO:0007669"/>
    <property type="project" value="TreeGrafter"/>
</dbReference>
<dbReference type="GO" id="GO:0006574">
    <property type="term" value="P:valine catabolic process"/>
    <property type="evidence" value="ECO:0007669"/>
    <property type="project" value="TreeGrafter"/>
</dbReference>
<dbReference type="CDD" id="cd07085">
    <property type="entry name" value="ALDH_F6_MMSDH"/>
    <property type="match status" value="1"/>
</dbReference>
<dbReference type="FunFam" id="3.40.309.10:FF:000002">
    <property type="entry name" value="Methylmalonate-semialdehyde dehydrogenase (Acylating)"/>
    <property type="match status" value="1"/>
</dbReference>
<dbReference type="FunFam" id="3.40.605.10:FF:000003">
    <property type="entry name" value="Methylmalonate-semialdehyde dehydrogenase [acylating]"/>
    <property type="match status" value="1"/>
</dbReference>
<dbReference type="Gene3D" id="3.40.605.10">
    <property type="entry name" value="Aldehyde Dehydrogenase, Chain A, domain 1"/>
    <property type="match status" value="1"/>
</dbReference>
<dbReference type="Gene3D" id="3.40.309.10">
    <property type="entry name" value="Aldehyde Dehydrogenase, Chain A, domain 2"/>
    <property type="match status" value="1"/>
</dbReference>
<dbReference type="HAMAP" id="MF_01670">
    <property type="entry name" value="IolA"/>
    <property type="match status" value="1"/>
</dbReference>
<dbReference type="InterPro" id="IPR016161">
    <property type="entry name" value="Ald_DH/histidinol_DH"/>
</dbReference>
<dbReference type="InterPro" id="IPR016163">
    <property type="entry name" value="Ald_DH_C"/>
</dbReference>
<dbReference type="InterPro" id="IPR016160">
    <property type="entry name" value="Ald_DH_CS_CYS"/>
</dbReference>
<dbReference type="InterPro" id="IPR016162">
    <property type="entry name" value="Ald_DH_N"/>
</dbReference>
<dbReference type="InterPro" id="IPR015590">
    <property type="entry name" value="Aldehyde_DH_dom"/>
</dbReference>
<dbReference type="InterPro" id="IPR010061">
    <property type="entry name" value="MeMal-semiAld_DH"/>
</dbReference>
<dbReference type="InterPro" id="IPR023510">
    <property type="entry name" value="MSDH_GmP_bac"/>
</dbReference>
<dbReference type="NCBIfam" id="TIGR01722">
    <property type="entry name" value="MMSDH"/>
    <property type="match status" value="1"/>
</dbReference>
<dbReference type="PANTHER" id="PTHR43866">
    <property type="entry name" value="MALONATE-SEMIALDEHYDE DEHYDROGENASE"/>
    <property type="match status" value="1"/>
</dbReference>
<dbReference type="PANTHER" id="PTHR43866:SF4">
    <property type="entry name" value="MALONATE-SEMIALDEHYDE DEHYDROGENASE"/>
    <property type="match status" value="1"/>
</dbReference>
<dbReference type="Pfam" id="PF00171">
    <property type="entry name" value="Aldedh"/>
    <property type="match status" value="1"/>
</dbReference>
<dbReference type="SUPFAM" id="SSF53720">
    <property type="entry name" value="ALDH-like"/>
    <property type="match status" value="1"/>
</dbReference>
<dbReference type="PROSITE" id="PS00070">
    <property type="entry name" value="ALDEHYDE_DEHYDR_CYS"/>
    <property type="match status" value="1"/>
</dbReference>